<comment type="subcellular location">
    <subcellularLocation>
        <location evidence="4">Secreted</location>
    </subcellularLocation>
</comment>
<comment type="similarity">
    <text evidence="3">Belongs to the peptidase S1 family.</text>
</comment>
<organism>
    <name type="scientific">Mus musculus</name>
    <name type="common">Mouse</name>
    <dbReference type="NCBI Taxonomy" id="10090"/>
    <lineage>
        <taxon>Eukaryota</taxon>
        <taxon>Metazoa</taxon>
        <taxon>Chordata</taxon>
        <taxon>Craniata</taxon>
        <taxon>Vertebrata</taxon>
        <taxon>Euteleostomi</taxon>
        <taxon>Mammalia</taxon>
        <taxon>Eutheria</taxon>
        <taxon>Euarchontoglires</taxon>
        <taxon>Glires</taxon>
        <taxon>Rodentia</taxon>
        <taxon>Myomorpha</taxon>
        <taxon>Muroidea</taxon>
        <taxon>Muridae</taxon>
        <taxon>Murinae</taxon>
        <taxon>Mus</taxon>
        <taxon>Mus</taxon>
    </lineage>
</organism>
<accession>Q14B25</accession>
<accession>Q7M755</accession>
<proteinExistence type="evidence at transcript level"/>
<reference key="1">
    <citation type="journal article" date="2009" name="PLoS Biol.">
        <title>Lineage-specific biology revealed by a finished genome assembly of the mouse.</title>
        <authorList>
            <person name="Church D.M."/>
            <person name="Goodstadt L."/>
            <person name="Hillier L.W."/>
            <person name="Zody M.C."/>
            <person name="Goldstein S."/>
            <person name="She X."/>
            <person name="Bult C.J."/>
            <person name="Agarwala R."/>
            <person name="Cherry J.L."/>
            <person name="DiCuccio M."/>
            <person name="Hlavina W."/>
            <person name="Kapustin Y."/>
            <person name="Meric P."/>
            <person name="Maglott D."/>
            <person name="Birtle Z."/>
            <person name="Marques A.C."/>
            <person name="Graves T."/>
            <person name="Zhou S."/>
            <person name="Teague B."/>
            <person name="Potamousis K."/>
            <person name="Churas C."/>
            <person name="Place M."/>
            <person name="Herschleb J."/>
            <person name="Runnheim R."/>
            <person name="Forrest D."/>
            <person name="Amos-Landgraf J."/>
            <person name="Schwartz D.C."/>
            <person name="Cheng Z."/>
            <person name="Lindblad-Toh K."/>
            <person name="Eichler E.E."/>
            <person name="Ponting C.P."/>
        </authorList>
    </citation>
    <scope>NUCLEOTIDE SEQUENCE [LARGE SCALE GENOMIC DNA]</scope>
    <source>
        <strain>C57BL/6J</strain>
    </source>
</reference>
<reference key="2">
    <citation type="journal article" date="2004" name="Genome Res.">
        <title>The status, quality, and expansion of the NIH full-length cDNA project: the Mammalian Gene Collection (MGC).</title>
        <authorList>
            <consortium name="The MGC Project Team"/>
        </authorList>
    </citation>
    <scope>NUCLEOTIDE SEQUENCE [LARGE SCALE MRNA]</scope>
</reference>
<reference key="3">
    <citation type="journal article" date="2003" name="Nat. Rev. Genet.">
        <title>Human and mouse proteases: a comparative genomic approach.</title>
        <authorList>
            <person name="Puente X.S."/>
            <person name="Sanchez L.M."/>
            <person name="Overall C.M."/>
            <person name="Lopez-Otin C."/>
        </authorList>
    </citation>
    <scope>IDENTIFICATION</scope>
    <source>
        <strain>C57BL/6J</strain>
    </source>
</reference>
<protein>
    <recommendedName>
        <fullName>Serine protease 48</fullName>
        <ecNumber>3.4.21.-</ecNumber>
    </recommendedName>
    <alternativeName>
        <fullName>Epidermis-specific serine protease-like protein</fullName>
    </alternativeName>
</protein>
<feature type="signal peptide" evidence="2">
    <location>
        <begin position="1"/>
        <end position="22"/>
    </location>
</feature>
<feature type="chain" id="PRO_0000331637" description="Serine protease 48">
    <location>
        <begin position="23"/>
        <end position="312"/>
    </location>
</feature>
<feature type="domain" description="Peptidase S1" evidence="3">
    <location>
        <begin position="40"/>
        <end position="276"/>
    </location>
</feature>
<feature type="active site" description="Charge relay system" evidence="1">
    <location>
        <position position="80"/>
    </location>
</feature>
<feature type="active site" description="Charge relay system" evidence="1">
    <location>
        <position position="126"/>
    </location>
</feature>
<feature type="active site" description="Charge relay system" evidence="1">
    <location>
        <position position="229"/>
    </location>
</feature>
<feature type="glycosylation site" description="N-linked (GlcNAc...) asparagine" evidence="2">
    <location>
        <position position="149"/>
    </location>
</feature>
<feature type="glycosylation site" description="N-linked (GlcNAc...) asparagine" evidence="2">
    <location>
        <position position="263"/>
    </location>
</feature>
<feature type="disulfide bond" evidence="3">
    <location>
        <begin position="65"/>
        <end position="81"/>
    </location>
</feature>
<feature type="disulfide bond" evidence="3">
    <location>
        <begin position="160"/>
        <end position="235"/>
    </location>
</feature>
<feature type="disulfide bond" evidence="3">
    <location>
        <begin position="190"/>
        <end position="214"/>
    </location>
</feature>
<feature type="disulfide bond" evidence="3">
    <location>
        <begin position="225"/>
        <end position="253"/>
    </location>
</feature>
<feature type="sequence conflict" description="In Ref. 2; AAI16379/AAI16380." evidence="4" ref="2">
    <original>G</original>
    <variation>D</variation>
    <location>
        <position position="43"/>
    </location>
</feature>
<feature type="sequence conflict" description="In Ref. 2; AAI16379/AAI16380." evidence="4" ref="2">
    <original>M</original>
    <variation>I</variation>
    <location>
        <position position="244"/>
    </location>
</feature>
<gene>
    <name type="primary">Prss48</name>
    <name type="synonym">Esspl</name>
    <name type="synonym">Gm1019</name>
</gene>
<evidence type="ECO:0000250" key="1"/>
<evidence type="ECO:0000255" key="2"/>
<evidence type="ECO:0000255" key="3">
    <source>
        <dbReference type="PROSITE-ProRule" id="PRU00274"/>
    </source>
</evidence>
<evidence type="ECO:0000305" key="4"/>
<keyword id="KW-1015">Disulfide bond</keyword>
<keyword id="KW-0325">Glycoprotein</keyword>
<keyword id="KW-0378">Hydrolase</keyword>
<keyword id="KW-0645">Protease</keyword>
<keyword id="KW-1185">Reference proteome</keyword>
<keyword id="KW-0964">Secreted</keyword>
<keyword id="KW-0720">Serine protease</keyword>
<keyword id="KW-0732">Signal</keyword>
<sequence length="312" mass="34637">MGPAGLKVLLLLFLGAFQGSFTKKKNLQSVCGRPVHTGRIVGGQDAALGRWPWQVSLRFDYTHSCGGSLISDHWVLTAAHCIKKTWYSFLYSVWLGSIDREYSSTGKEYYVSRIAIPDKHRHTEADIALLKLSSRVTFSSVILPICLPNISKQLTVPASCWVTGWGQNQEGHYPSTLQELEVPVISSEACEQLYNPIGVFLPDLERVIKEDMFCAGERQSRKDSCKGDSGGPLSCHIDGVWRLMGVVSWGLECGKDLPGVYTNVTYYQKWISAIISRAPPGWGGDSTHMTSCSLLCYFLWLSWDPPEPLALA</sequence>
<dbReference type="EC" id="3.4.21.-"/>
<dbReference type="EMBL" id="AC133508">
    <property type="status" value="NOT_ANNOTATED_CDS"/>
    <property type="molecule type" value="Genomic_DNA"/>
</dbReference>
<dbReference type="EMBL" id="BC116378">
    <property type="protein sequence ID" value="AAI16379.1"/>
    <property type="molecule type" value="mRNA"/>
</dbReference>
<dbReference type="EMBL" id="BC116379">
    <property type="protein sequence ID" value="AAI16380.1"/>
    <property type="molecule type" value="mRNA"/>
</dbReference>
<dbReference type="EMBL" id="BN000135">
    <property type="protein sequence ID" value="CAD67964.1"/>
    <property type="molecule type" value="mRNA"/>
</dbReference>
<dbReference type="CCDS" id="CCDS17444.1"/>
<dbReference type="RefSeq" id="NP_001001650.1">
    <property type="nucleotide sequence ID" value="NM_001001650.2"/>
</dbReference>
<dbReference type="SMR" id="Q14B25"/>
<dbReference type="FunCoup" id="Q14B25">
    <property type="interactions" value="178"/>
</dbReference>
<dbReference type="STRING" id="10090.ENSMUSP00000051199"/>
<dbReference type="MEROPS" id="S01.325"/>
<dbReference type="GlyCosmos" id="Q14B25">
    <property type="glycosylation" value="2 sites, No reported glycans"/>
</dbReference>
<dbReference type="GlyGen" id="Q14B25">
    <property type="glycosylation" value="2 sites"/>
</dbReference>
<dbReference type="PaxDb" id="10090-ENSMUSP00000051199"/>
<dbReference type="ProteomicsDB" id="291752"/>
<dbReference type="Antibodypedia" id="53070">
    <property type="antibodies" value="79 antibodies from 16 providers"/>
</dbReference>
<dbReference type="DNASU" id="368202"/>
<dbReference type="Ensembl" id="ENSMUST00000061343.4">
    <property type="protein sequence ID" value="ENSMUSP00000051199.4"/>
    <property type="gene ID" value="ENSMUSG00000049013.4"/>
</dbReference>
<dbReference type="GeneID" id="368202"/>
<dbReference type="KEGG" id="mmu:368202"/>
<dbReference type="UCSC" id="uc008pqz.1">
    <property type="organism name" value="mouse"/>
</dbReference>
<dbReference type="AGR" id="MGI:2685865"/>
<dbReference type="CTD" id="345062"/>
<dbReference type="MGI" id="MGI:2685865">
    <property type="gene designation" value="Prss48"/>
</dbReference>
<dbReference type="VEuPathDB" id="HostDB:ENSMUSG00000049013"/>
<dbReference type="eggNOG" id="KOG3627">
    <property type="taxonomic scope" value="Eukaryota"/>
</dbReference>
<dbReference type="GeneTree" id="ENSGT00940000160791"/>
<dbReference type="HOGENOM" id="CLU_006842_0_4_1"/>
<dbReference type="InParanoid" id="Q14B25"/>
<dbReference type="OMA" id="PRTWNTF"/>
<dbReference type="OrthoDB" id="10002959at2759"/>
<dbReference type="PhylomeDB" id="Q14B25"/>
<dbReference type="TreeFam" id="TF351676"/>
<dbReference type="BioGRID-ORCS" id="368202">
    <property type="hits" value="2 hits in 77 CRISPR screens"/>
</dbReference>
<dbReference type="PRO" id="PR:Q14B25"/>
<dbReference type="Proteomes" id="UP000000589">
    <property type="component" value="Chromosome 3"/>
</dbReference>
<dbReference type="RNAct" id="Q14B25">
    <property type="molecule type" value="protein"/>
</dbReference>
<dbReference type="Bgee" id="ENSMUSG00000049013">
    <property type="expression patterns" value="Expressed in blastoderm cell in morula and 26 other cell types or tissues"/>
</dbReference>
<dbReference type="GO" id="GO:0005576">
    <property type="term" value="C:extracellular region"/>
    <property type="evidence" value="ECO:0007669"/>
    <property type="project" value="UniProtKB-SubCell"/>
</dbReference>
<dbReference type="GO" id="GO:0004252">
    <property type="term" value="F:serine-type endopeptidase activity"/>
    <property type="evidence" value="ECO:0007669"/>
    <property type="project" value="InterPro"/>
</dbReference>
<dbReference type="GO" id="GO:0006508">
    <property type="term" value="P:proteolysis"/>
    <property type="evidence" value="ECO:0007669"/>
    <property type="project" value="UniProtKB-KW"/>
</dbReference>
<dbReference type="CDD" id="cd00190">
    <property type="entry name" value="Tryp_SPc"/>
    <property type="match status" value="1"/>
</dbReference>
<dbReference type="FunFam" id="2.40.10.10:FF:000039">
    <property type="entry name" value="Brain-specific serine protease 4"/>
    <property type="match status" value="1"/>
</dbReference>
<dbReference type="Gene3D" id="2.40.10.10">
    <property type="entry name" value="Trypsin-like serine proteases"/>
    <property type="match status" value="1"/>
</dbReference>
<dbReference type="InterPro" id="IPR009003">
    <property type="entry name" value="Peptidase_S1_PA"/>
</dbReference>
<dbReference type="InterPro" id="IPR043504">
    <property type="entry name" value="Peptidase_S1_PA_chymotrypsin"/>
</dbReference>
<dbReference type="InterPro" id="IPR001314">
    <property type="entry name" value="Peptidase_S1A"/>
</dbReference>
<dbReference type="InterPro" id="IPR001254">
    <property type="entry name" value="Trypsin_dom"/>
</dbReference>
<dbReference type="InterPro" id="IPR018114">
    <property type="entry name" value="TRYPSIN_HIS"/>
</dbReference>
<dbReference type="InterPro" id="IPR033116">
    <property type="entry name" value="TRYPSIN_SER"/>
</dbReference>
<dbReference type="PANTHER" id="PTHR24253:SF162">
    <property type="entry name" value="SERINE PROTEASE 48"/>
    <property type="match status" value="1"/>
</dbReference>
<dbReference type="PANTHER" id="PTHR24253">
    <property type="entry name" value="TRANSMEMBRANE PROTEASE SERINE"/>
    <property type="match status" value="1"/>
</dbReference>
<dbReference type="Pfam" id="PF00089">
    <property type="entry name" value="Trypsin"/>
    <property type="match status" value="1"/>
</dbReference>
<dbReference type="PRINTS" id="PR00722">
    <property type="entry name" value="CHYMOTRYPSIN"/>
</dbReference>
<dbReference type="SMART" id="SM00020">
    <property type="entry name" value="Tryp_SPc"/>
    <property type="match status" value="1"/>
</dbReference>
<dbReference type="SUPFAM" id="SSF50494">
    <property type="entry name" value="Trypsin-like serine proteases"/>
    <property type="match status" value="1"/>
</dbReference>
<dbReference type="PROSITE" id="PS50240">
    <property type="entry name" value="TRYPSIN_DOM"/>
    <property type="match status" value="1"/>
</dbReference>
<dbReference type="PROSITE" id="PS00134">
    <property type="entry name" value="TRYPSIN_HIS"/>
    <property type="match status" value="1"/>
</dbReference>
<dbReference type="PROSITE" id="PS00135">
    <property type="entry name" value="TRYPSIN_SER"/>
    <property type="match status" value="1"/>
</dbReference>
<name>PRS48_MOUSE</name>